<reference key="1">
    <citation type="journal article" date="2003" name="Proc. Natl. Acad. Sci. U.S.A.">
        <title>The complete genome sequence of Chromobacterium violaceum reveals remarkable and exploitable bacterial adaptability.</title>
        <authorList>
            <person name="Vasconcelos A.T.R."/>
            <person name="de Almeida D.F."/>
            <person name="Hungria M."/>
            <person name="Guimaraes C.T."/>
            <person name="Antonio R.V."/>
            <person name="Almeida F.C."/>
            <person name="de Almeida L.G.P."/>
            <person name="de Almeida R."/>
            <person name="Alves-Gomes J.A."/>
            <person name="Andrade E.M."/>
            <person name="Araripe J."/>
            <person name="de Araujo M.F.F."/>
            <person name="Astolfi-Filho S."/>
            <person name="Azevedo V."/>
            <person name="Baptista A.J."/>
            <person name="Bataus L.A.M."/>
            <person name="Batista J.S."/>
            <person name="Belo A."/>
            <person name="van den Berg C."/>
            <person name="Bogo M."/>
            <person name="Bonatto S."/>
            <person name="Bordignon J."/>
            <person name="Brigido M.M."/>
            <person name="Brito C.A."/>
            <person name="Brocchi M."/>
            <person name="Burity H.A."/>
            <person name="Camargo A.A."/>
            <person name="Cardoso D.D.P."/>
            <person name="Carneiro N.P."/>
            <person name="Carraro D.M."/>
            <person name="Carvalho C.M.B."/>
            <person name="Cascardo J.C.M."/>
            <person name="Cavada B.S."/>
            <person name="Chueire L.M.O."/>
            <person name="Creczynski-Pasa T.B."/>
            <person name="Cunha-Junior N.C."/>
            <person name="Fagundes N."/>
            <person name="Falcao C.L."/>
            <person name="Fantinatti F."/>
            <person name="Farias I.P."/>
            <person name="Felipe M.S.S."/>
            <person name="Ferrari L.P."/>
            <person name="Ferro J.A."/>
            <person name="Ferro M.I.T."/>
            <person name="Franco G.R."/>
            <person name="Freitas N.S.A."/>
            <person name="Furlan L.R."/>
            <person name="Gazzinelli R.T."/>
            <person name="Gomes E.A."/>
            <person name="Goncalves P.R."/>
            <person name="Grangeiro T.B."/>
            <person name="Grattapaglia D."/>
            <person name="Grisard E.C."/>
            <person name="Hanna E.S."/>
            <person name="Jardim S.N."/>
            <person name="Laurino J."/>
            <person name="Leoi L.C.T."/>
            <person name="Lima L.F.A."/>
            <person name="Loureiro M.F."/>
            <person name="Lyra M.C.C.P."/>
            <person name="Madeira H.M.F."/>
            <person name="Manfio G.P."/>
            <person name="Maranhao A.Q."/>
            <person name="Martins W.S."/>
            <person name="di Mauro S.M.Z."/>
            <person name="de Medeiros S.R.B."/>
            <person name="Meissner R.V."/>
            <person name="Moreira M.A.M."/>
            <person name="Nascimento F.F."/>
            <person name="Nicolas M.F."/>
            <person name="Oliveira J.G."/>
            <person name="Oliveira S.C."/>
            <person name="Paixao R.F.C."/>
            <person name="Parente J.A."/>
            <person name="Pedrosa F.O."/>
            <person name="Pena S.D.J."/>
            <person name="Pereira J.O."/>
            <person name="Pereira M."/>
            <person name="Pinto L.S.R.C."/>
            <person name="Pinto L.S."/>
            <person name="Porto J.I.R."/>
            <person name="Potrich D.P."/>
            <person name="Ramalho-Neto C.E."/>
            <person name="Reis A.M.M."/>
            <person name="Rigo L.U."/>
            <person name="Rondinelli E."/>
            <person name="Santos E.B.P."/>
            <person name="Santos F.R."/>
            <person name="Schneider M.P.C."/>
            <person name="Seuanez H.N."/>
            <person name="Silva A.M.R."/>
            <person name="da Silva A.L.C."/>
            <person name="Silva D.W."/>
            <person name="Silva R."/>
            <person name="Simoes I.C."/>
            <person name="Simon D."/>
            <person name="Soares C.M.A."/>
            <person name="Soares R.B.A."/>
            <person name="Souza E.M."/>
            <person name="Souza K.R.L."/>
            <person name="Souza R.C."/>
            <person name="Steffens M.B.R."/>
            <person name="Steindel M."/>
            <person name="Teixeira S.R."/>
            <person name="Urmenyi T."/>
            <person name="Vettore A."/>
            <person name="Wassem R."/>
            <person name="Zaha A."/>
            <person name="Simpson A.J.G."/>
        </authorList>
    </citation>
    <scope>NUCLEOTIDE SEQUENCE [LARGE SCALE GENOMIC DNA]</scope>
    <source>
        <strain>ATCC 12472 / DSM 30191 / JCM 1249 / CCUG 213 / NBRC 12614 / NCIMB 9131 / NCTC 9757 / MK</strain>
    </source>
</reference>
<gene>
    <name evidence="1" type="primary">minC</name>
    <name type="ordered locus">CV_3375</name>
</gene>
<name>MINC_CHRVO</name>
<comment type="function">
    <text evidence="1">Cell division inhibitor that blocks the formation of polar Z ring septums. Rapidly oscillates between the poles of the cell to destabilize FtsZ filaments that have formed before they mature into polar Z rings. Prevents FtsZ polymerization.</text>
</comment>
<comment type="subunit">
    <text evidence="1">Interacts with MinD and FtsZ.</text>
</comment>
<comment type="similarity">
    <text evidence="1">Belongs to the MinC family.</text>
</comment>
<protein>
    <recommendedName>
        <fullName evidence="1">Probable septum site-determining protein MinC</fullName>
    </recommendedName>
</protein>
<keyword id="KW-0131">Cell cycle</keyword>
<keyword id="KW-0132">Cell division</keyword>
<keyword id="KW-1185">Reference proteome</keyword>
<keyword id="KW-0717">Septation</keyword>
<sequence length="240" mass="25110">MSPVANAFDIKSASLDLLALLLRTDNLDELSQALDARFGDTSDAPAEAFVLDVEALPNPTELDLGRLLPLLSRRGIRAVALRHPDNALAAVASRYGLAFANSAAQPRSAQAAAEPAPKAAVESAAAPASAPTMIIDRPVRAGQQIYAKGGDLVVLAMVSAGAEVIADGNIHVYAPLRGRALAGARGNHAARIFARSMEAELVSIAGVYRTIEQALPDSILGKPTQIYLENERLVMTALGE</sequence>
<accession>Q7NSP5</accession>
<feature type="chain" id="PRO_0000189028" description="Probable septum site-determining protein MinC">
    <location>
        <begin position="1"/>
        <end position="240"/>
    </location>
</feature>
<organism>
    <name type="scientific">Chromobacterium violaceum (strain ATCC 12472 / DSM 30191 / JCM 1249 / CCUG 213 / NBRC 12614 / NCIMB 9131 / NCTC 9757 / MK)</name>
    <dbReference type="NCBI Taxonomy" id="243365"/>
    <lineage>
        <taxon>Bacteria</taxon>
        <taxon>Pseudomonadati</taxon>
        <taxon>Pseudomonadota</taxon>
        <taxon>Betaproteobacteria</taxon>
        <taxon>Neisseriales</taxon>
        <taxon>Chromobacteriaceae</taxon>
        <taxon>Chromobacterium</taxon>
    </lineage>
</organism>
<dbReference type="EMBL" id="AE016825">
    <property type="protein sequence ID" value="AAQ61039.1"/>
    <property type="molecule type" value="Genomic_DNA"/>
</dbReference>
<dbReference type="RefSeq" id="WP_011136922.1">
    <property type="nucleotide sequence ID" value="NC_005085.1"/>
</dbReference>
<dbReference type="SMR" id="Q7NSP5"/>
<dbReference type="STRING" id="243365.CV_3375"/>
<dbReference type="GeneID" id="66364596"/>
<dbReference type="KEGG" id="cvi:CV_3375"/>
<dbReference type="eggNOG" id="COG0850">
    <property type="taxonomic scope" value="Bacteria"/>
</dbReference>
<dbReference type="HOGENOM" id="CLU_067812_0_1_4"/>
<dbReference type="OrthoDB" id="9794530at2"/>
<dbReference type="Proteomes" id="UP000001424">
    <property type="component" value="Chromosome"/>
</dbReference>
<dbReference type="GO" id="GO:0000902">
    <property type="term" value="P:cell morphogenesis"/>
    <property type="evidence" value="ECO:0007669"/>
    <property type="project" value="InterPro"/>
</dbReference>
<dbReference type="GO" id="GO:0000917">
    <property type="term" value="P:division septum assembly"/>
    <property type="evidence" value="ECO:0007669"/>
    <property type="project" value="UniProtKB-KW"/>
</dbReference>
<dbReference type="GO" id="GO:0051302">
    <property type="term" value="P:regulation of cell division"/>
    <property type="evidence" value="ECO:0007669"/>
    <property type="project" value="InterPro"/>
</dbReference>
<dbReference type="GO" id="GO:1901891">
    <property type="term" value="P:regulation of cell septum assembly"/>
    <property type="evidence" value="ECO:0007669"/>
    <property type="project" value="InterPro"/>
</dbReference>
<dbReference type="Gene3D" id="2.160.20.70">
    <property type="match status" value="1"/>
</dbReference>
<dbReference type="Gene3D" id="3.30.70.260">
    <property type="match status" value="1"/>
</dbReference>
<dbReference type="HAMAP" id="MF_00267">
    <property type="entry name" value="MinC"/>
    <property type="match status" value="1"/>
</dbReference>
<dbReference type="InterPro" id="IPR016098">
    <property type="entry name" value="CAP/MinC_C"/>
</dbReference>
<dbReference type="InterPro" id="IPR013033">
    <property type="entry name" value="MinC"/>
</dbReference>
<dbReference type="InterPro" id="IPR036145">
    <property type="entry name" value="MinC_C_sf"/>
</dbReference>
<dbReference type="InterPro" id="IPR007874">
    <property type="entry name" value="MinC_N"/>
</dbReference>
<dbReference type="InterPro" id="IPR005526">
    <property type="entry name" value="Septum_form_inhib_MinC_C"/>
</dbReference>
<dbReference type="NCBIfam" id="TIGR01222">
    <property type="entry name" value="minC"/>
    <property type="match status" value="1"/>
</dbReference>
<dbReference type="PANTHER" id="PTHR34108">
    <property type="entry name" value="SEPTUM SITE-DETERMINING PROTEIN MINC"/>
    <property type="match status" value="1"/>
</dbReference>
<dbReference type="PANTHER" id="PTHR34108:SF1">
    <property type="entry name" value="SEPTUM SITE-DETERMINING PROTEIN MINC"/>
    <property type="match status" value="1"/>
</dbReference>
<dbReference type="Pfam" id="PF03775">
    <property type="entry name" value="MinC_C"/>
    <property type="match status" value="1"/>
</dbReference>
<dbReference type="Pfam" id="PF05209">
    <property type="entry name" value="MinC_N"/>
    <property type="match status" value="1"/>
</dbReference>
<dbReference type="SUPFAM" id="SSF63848">
    <property type="entry name" value="Cell-division inhibitor MinC, C-terminal domain"/>
    <property type="match status" value="1"/>
</dbReference>
<evidence type="ECO:0000255" key="1">
    <source>
        <dbReference type="HAMAP-Rule" id="MF_00267"/>
    </source>
</evidence>
<proteinExistence type="inferred from homology"/>